<comment type="function">
    <text evidence="3 4 5">Exonuclease required for organelle DNA degradation during pollen development. Plays non-essential roles in maternal inheritance. May be part of the DNA salvage machinery.</text>
</comment>
<comment type="cofactor">
    <cofactor evidence="3">
        <name>Mg(2+)</name>
        <dbReference type="ChEBI" id="CHEBI:18420"/>
    </cofactor>
</comment>
<comment type="activity regulation">
    <text evidence="5">Inhibited by free nucleotide diphosphates (NDPs).</text>
</comment>
<comment type="subcellular location">
    <subcellularLocation>
        <location evidence="3">Plastid</location>
        <location evidence="3">Chloroplast</location>
    </subcellularLocation>
    <subcellularLocation>
        <location evidence="3">Mitochondrion</location>
    </subcellularLocation>
</comment>
<comment type="tissue specificity">
    <text evidence="3 4">Highly expressed in mature pollen grains. Detected in flowers, senescing leaves and roots.</text>
</comment>
<comment type="developmental stage">
    <text evidence="3">Starts to express at the bicellular pollen stage, with a peak at the tricellular pollen stage.</text>
</comment>
<comment type="disruption phenotype">
    <text evidence="3">No visible phenotype.</text>
</comment>
<comment type="miscellaneous">
    <text evidence="8">DPD1 homologs are present in flowering plants but not in moss, green algae and animals.</text>
</comment>
<comment type="similarity">
    <text evidence="7">Belongs to the exonuclease superfamily. TREX family.</text>
</comment>
<proteinExistence type="evidence at protein level"/>
<feature type="transit peptide" description="Chloroplast and mitochondrion" evidence="2">
    <location>
        <begin position="1"/>
        <end position="63"/>
    </location>
</feature>
<feature type="chain" id="PRO_0000430887" description="Exonuclease DPD1, chloroplastic/mitochondrial" evidence="2">
    <location>
        <begin position="64"/>
        <end position="316"/>
    </location>
</feature>
<feature type="domain" description="Exonuclease" evidence="2">
    <location>
        <begin position="112"/>
        <end position="282"/>
    </location>
</feature>
<feature type="active site" description="Proton donor/acceptor" evidence="1">
    <location>
        <position position="269"/>
    </location>
</feature>
<feature type="binding site" evidence="1">
    <location>
        <position position="115"/>
    </location>
    <ligand>
        <name>Mg(2+)</name>
        <dbReference type="ChEBI" id="CHEBI:18420"/>
        <label>1</label>
    </ligand>
</feature>
<feature type="binding site" evidence="1">
    <location>
        <position position="115"/>
    </location>
    <ligand>
        <name>Mg(2+)</name>
        <dbReference type="ChEBI" id="CHEBI:18420"/>
        <label>2</label>
    </ligand>
</feature>
<feature type="binding site" evidence="1">
    <location>
        <position position="117"/>
    </location>
    <ligand>
        <name>Mg(2+)</name>
        <dbReference type="ChEBI" id="CHEBI:18420"/>
        <label>1</label>
    </ligand>
</feature>
<feature type="binding site" evidence="1">
    <location>
        <position position="274"/>
    </location>
    <ligand>
        <name>Mg(2+)</name>
        <dbReference type="ChEBI" id="CHEBI:18420"/>
        <label>1</label>
    </ligand>
</feature>
<feature type="mutagenesis site" description="In dpd1-3; loss of activity." evidence="3">
    <original>R</original>
    <variation>W</variation>
    <location>
        <position position="123"/>
    </location>
</feature>
<feature type="mutagenesis site" description="In dpd1-2; loss of activity." evidence="3">
    <original>G</original>
    <variation>S</variation>
    <location>
        <position position="204"/>
    </location>
</feature>
<feature type="mutagenesis site" description="In dpd1-1; loss of activity." evidence="3">
    <original>A</original>
    <variation>V</variation>
    <location>
        <position position="236"/>
    </location>
</feature>
<feature type="sequence conflict" description="In Ref. 5; AAM64709." ref="5">
    <original>I</original>
    <variation>V</variation>
    <location>
        <position position="3"/>
    </location>
</feature>
<feature type="sequence conflict" description="In Ref. 4; BAD43289." ref="4">
    <original>K</original>
    <variation>E</variation>
    <location>
        <position position="124"/>
    </location>
</feature>
<sequence length="316" mass="35248">MCISISQVSRLRIHSFGSSCCERVHGWIKNSSSLKLLDVRASSVDGKARWIRRNVSTTTQGSRSNTKSSVLGGTVPVTRIIDEESRTKVQPFGNLQQRLAQDKDLSKLLTVIVSDLETTGLHRKNERIIEIAAQDIAGGGYSTFQTLVNPGVVPITNAHIHGIRNDMVCRPEVPRMEELIPIFLRYVESRQKPGGYVMLVAHNGKSFDFQFLINEFNRCSYEIPHNWLLLDSLPLARENMKSVEPTVKLSSSLEALADYYSLTREGDAHRALSDVLLLSKVFQKLTIDLKLSLSDLVLRCHTASDISAAMAKNKKA</sequence>
<gene>
    <name evidence="6" type="primary">DPD1</name>
    <name evidence="9" type="ordered locus">At5g26940</name>
    <name evidence="11" type="ORF">F2P16.200</name>
</gene>
<reference key="1">
    <citation type="journal article" date="2000" name="Nature">
        <title>Sequence and analysis of chromosome 5 of the plant Arabidopsis thaliana.</title>
        <authorList>
            <person name="Tabata S."/>
            <person name="Kaneko T."/>
            <person name="Nakamura Y."/>
            <person name="Kotani H."/>
            <person name="Kato T."/>
            <person name="Asamizu E."/>
            <person name="Miyajima N."/>
            <person name="Sasamoto S."/>
            <person name="Kimura T."/>
            <person name="Hosouchi T."/>
            <person name="Kawashima K."/>
            <person name="Kohara M."/>
            <person name="Matsumoto M."/>
            <person name="Matsuno A."/>
            <person name="Muraki A."/>
            <person name="Nakayama S."/>
            <person name="Nakazaki N."/>
            <person name="Naruo K."/>
            <person name="Okumura S."/>
            <person name="Shinpo S."/>
            <person name="Takeuchi C."/>
            <person name="Wada T."/>
            <person name="Watanabe A."/>
            <person name="Yamada M."/>
            <person name="Yasuda M."/>
            <person name="Sato S."/>
            <person name="de la Bastide M."/>
            <person name="Huang E."/>
            <person name="Spiegel L."/>
            <person name="Gnoj L."/>
            <person name="O'Shaughnessy A."/>
            <person name="Preston R."/>
            <person name="Habermann K."/>
            <person name="Murray J."/>
            <person name="Johnson D."/>
            <person name="Rohlfing T."/>
            <person name="Nelson J."/>
            <person name="Stoneking T."/>
            <person name="Pepin K."/>
            <person name="Spieth J."/>
            <person name="Sekhon M."/>
            <person name="Armstrong J."/>
            <person name="Becker M."/>
            <person name="Belter E."/>
            <person name="Cordum H."/>
            <person name="Cordes M."/>
            <person name="Courtney L."/>
            <person name="Courtney W."/>
            <person name="Dante M."/>
            <person name="Du H."/>
            <person name="Edwards J."/>
            <person name="Fryman J."/>
            <person name="Haakensen B."/>
            <person name="Lamar E."/>
            <person name="Latreille P."/>
            <person name="Leonard S."/>
            <person name="Meyer R."/>
            <person name="Mulvaney E."/>
            <person name="Ozersky P."/>
            <person name="Riley A."/>
            <person name="Strowmatt C."/>
            <person name="Wagner-McPherson C."/>
            <person name="Wollam A."/>
            <person name="Yoakum M."/>
            <person name="Bell M."/>
            <person name="Dedhia N."/>
            <person name="Parnell L."/>
            <person name="Shah R."/>
            <person name="Rodriguez M."/>
            <person name="Hoon See L."/>
            <person name="Vil D."/>
            <person name="Baker J."/>
            <person name="Kirchoff K."/>
            <person name="Toth K."/>
            <person name="King L."/>
            <person name="Bahret A."/>
            <person name="Miller B."/>
            <person name="Marra M.A."/>
            <person name="Martienssen R."/>
            <person name="McCombie W.R."/>
            <person name="Wilson R.K."/>
            <person name="Murphy G."/>
            <person name="Bancroft I."/>
            <person name="Volckaert G."/>
            <person name="Wambutt R."/>
            <person name="Duesterhoeft A."/>
            <person name="Stiekema W."/>
            <person name="Pohl T."/>
            <person name="Entian K.-D."/>
            <person name="Terryn N."/>
            <person name="Hartley N."/>
            <person name="Bent E."/>
            <person name="Johnson S."/>
            <person name="Langham S.-A."/>
            <person name="McCullagh B."/>
            <person name="Robben J."/>
            <person name="Grymonprez B."/>
            <person name="Zimmermann W."/>
            <person name="Ramsperger U."/>
            <person name="Wedler H."/>
            <person name="Balke K."/>
            <person name="Wedler E."/>
            <person name="Peters S."/>
            <person name="van Staveren M."/>
            <person name="Dirkse W."/>
            <person name="Mooijman P."/>
            <person name="Klein Lankhorst R."/>
            <person name="Weitzenegger T."/>
            <person name="Bothe G."/>
            <person name="Rose M."/>
            <person name="Hauf J."/>
            <person name="Berneiser S."/>
            <person name="Hempel S."/>
            <person name="Feldpausch M."/>
            <person name="Lamberth S."/>
            <person name="Villarroel R."/>
            <person name="Gielen J."/>
            <person name="Ardiles W."/>
            <person name="Bents O."/>
            <person name="Lemcke K."/>
            <person name="Kolesov G."/>
            <person name="Mayer K.F.X."/>
            <person name="Rudd S."/>
            <person name="Schoof H."/>
            <person name="Schueller C."/>
            <person name="Zaccaria P."/>
            <person name="Mewes H.-W."/>
            <person name="Bevan M."/>
            <person name="Fransz P.F."/>
        </authorList>
    </citation>
    <scope>NUCLEOTIDE SEQUENCE [LARGE SCALE GENOMIC DNA]</scope>
    <source>
        <strain>cv. Columbia</strain>
    </source>
</reference>
<reference key="2">
    <citation type="journal article" date="2017" name="Plant J.">
        <title>Araport11: a complete reannotation of the Arabidopsis thaliana reference genome.</title>
        <authorList>
            <person name="Cheng C.Y."/>
            <person name="Krishnakumar V."/>
            <person name="Chan A.P."/>
            <person name="Thibaud-Nissen F."/>
            <person name="Schobel S."/>
            <person name="Town C.D."/>
        </authorList>
    </citation>
    <scope>GENOME REANNOTATION</scope>
    <source>
        <strain>cv. Columbia</strain>
    </source>
</reference>
<reference key="3">
    <citation type="submission" date="2006-06" db="EMBL/GenBank/DDBJ databases">
        <title>Arabidopsis ORF clones.</title>
        <authorList>
            <person name="Quinitio C."/>
            <person name="Chen H."/>
            <person name="Kim C.J."/>
            <person name="Shinn P."/>
            <person name="Ecker J.R."/>
        </authorList>
    </citation>
    <scope>NUCLEOTIDE SEQUENCE [LARGE SCALE MRNA]</scope>
</reference>
<reference key="4">
    <citation type="submission" date="2004-09" db="EMBL/GenBank/DDBJ databases">
        <title>Large-scale analysis of RIKEN Arabidopsis full-length (RAFL) cDNAs.</title>
        <authorList>
            <person name="Totoki Y."/>
            <person name="Seki M."/>
            <person name="Ishida J."/>
            <person name="Nakajima M."/>
            <person name="Enju A."/>
            <person name="Kamiya A."/>
            <person name="Narusaka M."/>
            <person name="Shin-i T."/>
            <person name="Nakagawa M."/>
            <person name="Sakamoto N."/>
            <person name="Oishi K."/>
            <person name="Kohara Y."/>
            <person name="Kobayashi M."/>
            <person name="Toyoda A."/>
            <person name="Sakaki Y."/>
            <person name="Sakurai T."/>
            <person name="Iida K."/>
            <person name="Akiyama K."/>
            <person name="Satou M."/>
            <person name="Toyoda T."/>
            <person name="Konagaya A."/>
            <person name="Carninci P."/>
            <person name="Kawai J."/>
            <person name="Hayashizaki Y."/>
            <person name="Shinozaki K."/>
        </authorList>
    </citation>
    <scope>NUCLEOTIDE SEQUENCE [LARGE SCALE MRNA]</scope>
    <source>
        <strain>cv. Columbia</strain>
    </source>
</reference>
<reference key="5">
    <citation type="submission" date="2002-03" db="EMBL/GenBank/DDBJ databases">
        <title>Full-length cDNA from Arabidopsis thaliana.</title>
        <authorList>
            <person name="Brover V.V."/>
            <person name="Troukhan M.E."/>
            <person name="Alexandrov N.A."/>
            <person name="Lu Y.-P."/>
            <person name="Flavell R.B."/>
            <person name="Feldmann K.A."/>
        </authorList>
    </citation>
    <scope>NUCLEOTIDE SEQUENCE [LARGE SCALE MRNA]</scope>
</reference>
<reference key="6">
    <citation type="journal article" date="2011" name="Plant Cell">
        <title>A conserved, Mg2+-dependent exonuclease degrades organelle DNA during Arabidopsis pollen development.</title>
        <authorList>
            <person name="Matsushima R."/>
            <person name="Tang L.Y."/>
            <person name="Zhang L."/>
            <person name="Yamada H."/>
            <person name="Twell D."/>
            <person name="Sakamoto W."/>
        </authorList>
    </citation>
    <scope>FUNCTION</scope>
    <scope>DISRUPTION PHENOTYPE</scope>
    <scope>MUTAGENESIS OF ARG-123; GLY-204 AND ALA-236</scope>
    <scope>SUBCELLULAR LOCATION</scope>
    <scope>COFACTOR</scope>
    <scope>TISSUE SPECIFICITY</scope>
    <scope>DEVELOPMENTAL STAGE</scope>
    <source>
        <strain>cv. Columbia</strain>
        <strain>cv. No-0</strain>
    </source>
</reference>
<reference key="7">
    <citation type="journal article" date="2011" name="Plant Signal. Behav.">
        <title>Tissue-specific organelle DNA degradation mediated by DPD1 exonuclease.</title>
        <authorList>
            <person name="Tang L.Y."/>
            <person name="Sakamoto W."/>
        </authorList>
    </citation>
    <scope>FUNCTION</scope>
    <scope>TISSUE SPECIFICITY</scope>
</reference>
<reference key="8">
    <citation type="journal article" date="2012" name="Plant J.">
        <title>Mutations defective in ribonucleotide reductase activity interfere with pollen plastid DNA degradation mediated by DPD1 exonuclease.</title>
        <authorList>
            <person name="Tang L.Y."/>
            <person name="Matsushima R."/>
            <person name="Sakamoto W."/>
        </authorList>
    </citation>
    <scope>FUNCTION</scope>
    <scope>ACTIVITY REGULATION</scope>
</reference>
<evidence type="ECO:0000250" key="1">
    <source>
        <dbReference type="UniProtKB" id="Q91XB0"/>
    </source>
</evidence>
<evidence type="ECO:0000255" key="2"/>
<evidence type="ECO:0000269" key="3">
    <source>
    </source>
</evidence>
<evidence type="ECO:0000269" key="4">
    <source>
    </source>
</evidence>
<evidence type="ECO:0000269" key="5">
    <source>
    </source>
</evidence>
<evidence type="ECO:0000303" key="6">
    <source>
    </source>
</evidence>
<evidence type="ECO:0000305" key="7"/>
<evidence type="ECO:0000305" key="8">
    <source>
    </source>
</evidence>
<evidence type="ECO:0000312" key="9">
    <source>
        <dbReference type="Araport" id="AT5G26940"/>
    </source>
</evidence>
<evidence type="ECO:0000312" key="10">
    <source>
        <dbReference type="EMBL" id="AED93629.1"/>
    </source>
</evidence>
<evidence type="ECO:0000312" key="11">
    <source>
        <dbReference type="EMBL" id="AF007270"/>
    </source>
</evidence>
<evidence type="ECO:0000312" key="12">
    <source>
        <dbReference type="EMBL" id="BAD43034.1"/>
    </source>
</evidence>
<organism evidence="12">
    <name type="scientific">Arabidopsis thaliana</name>
    <name type="common">Mouse-ear cress</name>
    <dbReference type="NCBI Taxonomy" id="3702"/>
    <lineage>
        <taxon>Eukaryota</taxon>
        <taxon>Viridiplantae</taxon>
        <taxon>Streptophyta</taxon>
        <taxon>Embryophyta</taxon>
        <taxon>Tracheophyta</taxon>
        <taxon>Spermatophyta</taxon>
        <taxon>Magnoliopsida</taxon>
        <taxon>eudicotyledons</taxon>
        <taxon>Gunneridae</taxon>
        <taxon>Pentapetalae</taxon>
        <taxon>rosids</taxon>
        <taxon>malvids</taxon>
        <taxon>Brassicales</taxon>
        <taxon>Brassicaceae</taxon>
        <taxon>Camelineae</taxon>
        <taxon>Arabidopsis</taxon>
    </lineage>
</organism>
<protein>
    <recommendedName>
        <fullName evidence="6">Exonuclease DPD1, chloroplastic/mitochondrial</fullName>
        <ecNumber>3.1.11.-</ecNumber>
    </recommendedName>
    <alternativeName>
        <fullName evidence="10">Mg2+-dependent DNA exonuclease</fullName>
    </alternativeName>
    <alternativeName>
        <fullName evidence="6">Protein DEFECTIVE IN POLLEN DNA DEGRADATION 1</fullName>
    </alternativeName>
</protein>
<dbReference type="EC" id="3.1.11.-"/>
<dbReference type="EMBL" id="AF007270">
    <property type="status" value="NOT_ANNOTATED_CDS"/>
    <property type="molecule type" value="Genomic_DNA"/>
</dbReference>
<dbReference type="EMBL" id="CP002688">
    <property type="protein sequence ID" value="AED93629.1"/>
    <property type="molecule type" value="Genomic_DNA"/>
</dbReference>
<dbReference type="EMBL" id="CP002688">
    <property type="protein sequence ID" value="AED93630.1"/>
    <property type="molecule type" value="Genomic_DNA"/>
</dbReference>
<dbReference type="EMBL" id="CP002688">
    <property type="protein sequence ID" value="AED93631.1"/>
    <property type="molecule type" value="Genomic_DNA"/>
</dbReference>
<dbReference type="EMBL" id="CP002688">
    <property type="protein sequence ID" value="AED93632.1"/>
    <property type="molecule type" value="Genomic_DNA"/>
</dbReference>
<dbReference type="EMBL" id="BT025876">
    <property type="protein sequence ID" value="ABF85778.1"/>
    <property type="molecule type" value="mRNA"/>
</dbReference>
<dbReference type="EMBL" id="AK175271">
    <property type="protein sequence ID" value="BAD43034.1"/>
    <property type="molecule type" value="mRNA"/>
</dbReference>
<dbReference type="EMBL" id="AK175526">
    <property type="protein sequence ID" value="BAD43289.1"/>
    <property type="molecule type" value="mRNA"/>
</dbReference>
<dbReference type="EMBL" id="AY087151">
    <property type="protein sequence ID" value="AAM64709.1"/>
    <property type="molecule type" value="mRNA"/>
</dbReference>
<dbReference type="PIR" id="T01771">
    <property type="entry name" value="T01771"/>
</dbReference>
<dbReference type="RefSeq" id="NP_198046.1">
    <property type="nucleotide sequence ID" value="NM_122576.5"/>
</dbReference>
<dbReference type="RefSeq" id="NP_851082.1">
    <property type="nucleotide sequence ID" value="NM_180751.2"/>
</dbReference>
<dbReference type="RefSeq" id="NP_851083.1">
    <property type="nucleotide sequence ID" value="NM_180752.3"/>
</dbReference>
<dbReference type="RefSeq" id="NP_974842.1">
    <property type="nucleotide sequence ID" value="NM_203113.3"/>
</dbReference>
<dbReference type="SMR" id="Q682U6"/>
<dbReference type="FunCoup" id="Q682U6">
    <property type="interactions" value="172"/>
</dbReference>
<dbReference type="STRING" id="3702.Q682U6"/>
<dbReference type="iPTMnet" id="Q682U6"/>
<dbReference type="PaxDb" id="3702-AT5G26940.2"/>
<dbReference type="ProteomicsDB" id="241245"/>
<dbReference type="EnsemblPlants" id="AT5G26940.1">
    <property type="protein sequence ID" value="AT5G26940.1"/>
    <property type="gene ID" value="AT5G26940"/>
</dbReference>
<dbReference type="EnsemblPlants" id="AT5G26940.2">
    <property type="protein sequence ID" value="AT5G26940.2"/>
    <property type="gene ID" value="AT5G26940"/>
</dbReference>
<dbReference type="EnsemblPlants" id="AT5G26940.3">
    <property type="protein sequence ID" value="AT5G26940.3"/>
    <property type="gene ID" value="AT5G26940"/>
</dbReference>
<dbReference type="EnsemblPlants" id="AT5G26940.4">
    <property type="protein sequence ID" value="AT5G26940.4"/>
    <property type="gene ID" value="AT5G26940"/>
</dbReference>
<dbReference type="GeneID" id="832752"/>
<dbReference type="Gramene" id="AT5G26940.1">
    <property type="protein sequence ID" value="AT5G26940.1"/>
    <property type="gene ID" value="AT5G26940"/>
</dbReference>
<dbReference type="Gramene" id="AT5G26940.2">
    <property type="protein sequence ID" value="AT5G26940.2"/>
    <property type="gene ID" value="AT5G26940"/>
</dbReference>
<dbReference type="Gramene" id="AT5G26940.3">
    <property type="protein sequence ID" value="AT5G26940.3"/>
    <property type="gene ID" value="AT5G26940"/>
</dbReference>
<dbReference type="Gramene" id="AT5G26940.4">
    <property type="protein sequence ID" value="AT5G26940.4"/>
    <property type="gene ID" value="AT5G26940"/>
</dbReference>
<dbReference type="KEGG" id="ath:AT5G26940"/>
<dbReference type="Araport" id="AT5G26940"/>
<dbReference type="TAIR" id="AT5G26940">
    <property type="gene designation" value="DPD1"/>
</dbReference>
<dbReference type="eggNOG" id="KOG4793">
    <property type="taxonomic scope" value="Eukaryota"/>
</dbReference>
<dbReference type="HOGENOM" id="CLU_060445_0_0_1"/>
<dbReference type="InParanoid" id="Q682U6"/>
<dbReference type="OMA" id="IPPDWLF"/>
<dbReference type="PRO" id="PR:Q682U6"/>
<dbReference type="Proteomes" id="UP000006548">
    <property type="component" value="Chromosome 5"/>
</dbReference>
<dbReference type="ExpressionAtlas" id="Q682U6">
    <property type="expression patterns" value="baseline and differential"/>
</dbReference>
<dbReference type="GO" id="GO:0009507">
    <property type="term" value="C:chloroplast"/>
    <property type="evidence" value="ECO:0007669"/>
    <property type="project" value="UniProtKB-SubCell"/>
</dbReference>
<dbReference type="GO" id="GO:0005739">
    <property type="term" value="C:mitochondrion"/>
    <property type="evidence" value="ECO:0000314"/>
    <property type="project" value="TAIR"/>
</dbReference>
<dbReference type="GO" id="GO:0009536">
    <property type="term" value="C:plastid"/>
    <property type="evidence" value="ECO:0000314"/>
    <property type="project" value="TAIR"/>
</dbReference>
<dbReference type="GO" id="GO:0008408">
    <property type="term" value="F:3'-5' exonuclease activity"/>
    <property type="evidence" value="ECO:0007669"/>
    <property type="project" value="InterPro"/>
</dbReference>
<dbReference type="GO" id="GO:0004527">
    <property type="term" value="F:exonuclease activity"/>
    <property type="evidence" value="ECO:0000314"/>
    <property type="project" value="TAIR"/>
</dbReference>
<dbReference type="GO" id="GO:0046872">
    <property type="term" value="F:metal ion binding"/>
    <property type="evidence" value="ECO:0007669"/>
    <property type="project" value="UniProtKB-KW"/>
</dbReference>
<dbReference type="GO" id="GO:0003676">
    <property type="term" value="F:nucleic acid binding"/>
    <property type="evidence" value="ECO:0007669"/>
    <property type="project" value="InterPro"/>
</dbReference>
<dbReference type="CDD" id="cd06127">
    <property type="entry name" value="DEDDh"/>
    <property type="match status" value="1"/>
</dbReference>
<dbReference type="Gene3D" id="3.30.420.10">
    <property type="entry name" value="Ribonuclease H-like superfamily/Ribonuclease H"/>
    <property type="match status" value="1"/>
</dbReference>
<dbReference type="InterPro" id="IPR013520">
    <property type="entry name" value="Exonuclease_RNaseT/DNA_pol3"/>
</dbReference>
<dbReference type="InterPro" id="IPR012337">
    <property type="entry name" value="RNaseH-like_sf"/>
</dbReference>
<dbReference type="InterPro" id="IPR036397">
    <property type="entry name" value="RNaseH_sf"/>
</dbReference>
<dbReference type="InterPro" id="IPR040393">
    <property type="entry name" value="TREX1/2"/>
</dbReference>
<dbReference type="PANTHER" id="PTHR13058:SF19">
    <property type="entry name" value="LD40940P"/>
    <property type="match status" value="1"/>
</dbReference>
<dbReference type="PANTHER" id="PTHR13058">
    <property type="entry name" value="THREE PRIME REPAIR EXONUCLEASE 1, 2"/>
    <property type="match status" value="1"/>
</dbReference>
<dbReference type="Pfam" id="PF00929">
    <property type="entry name" value="RNase_T"/>
    <property type="match status" value="1"/>
</dbReference>
<dbReference type="SMART" id="SM00479">
    <property type="entry name" value="EXOIII"/>
    <property type="match status" value="1"/>
</dbReference>
<dbReference type="SUPFAM" id="SSF53098">
    <property type="entry name" value="Ribonuclease H-like"/>
    <property type="match status" value="1"/>
</dbReference>
<keyword id="KW-0150">Chloroplast</keyword>
<keyword id="KW-0269">Exonuclease</keyword>
<keyword id="KW-0378">Hydrolase</keyword>
<keyword id="KW-0460">Magnesium</keyword>
<keyword id="KW-0479">Metal-binding</keyword>
<keyword id="KW-0496">Mitochondrion</keyword>
<keyword id="KW-0540">Nuclease</keyword>
<keyword id="KW-0934">Plastid</keyword>
<keyword id="KW-1185">Reference proteome</keyword>
<keyword id="KW-0809">Transit peptide</keyword>
<accession>Q682U6</accession>
<accession>Q681U1</accession>
<accession>Q8LBK8</accession>
<name>DPD1_ARATH</name>